<gene>
    <name evidence="1" type="primary">cofG</name>
    <name type="ordered locus">Mboo_2201</name>
</gene>
<evidence type="ECO:0000255" key="1">
    <source>
        <dbReference type="HAMAP-Rule" id="MF_01611"/>
    </source>
</evidence>
<evidence type="ECO:0000255" key="2">
    <source>
        <dbReference type="PROSITE-ProRule" id="PRU01266"/>
    </source>
</evidence>
<feature type="chain" id="PRO_1000069447" description="7,8-didemethyl-8-hydroxy-5-deazariboflavin synthase">
    <location>
        <begin position="1"/>
        <end position="329"/>
    </location>
</feature>
<feature type="domain" description="Radical SAM core" evidence="2">
    <location>
        <begin position="6"/>
        <end position="244"/>
    </location>
</feature>
<feature type="binding site" evidence="1">
    <location>
        <position position="20"/>
    </location>
    <ligand>
        <name>[4Fe-4S] cluster</name>
        <dbReference type="ChEBI" id="CHEBI:49883"/>
        <note>4Fe-4S-S-AdoMet</note>
    </ligand>
</feature>
<feature type="binding site" evidence="1">
    <location>
        <position position="24"/>
    </location>
    <ligand>
        <name>[4Fe-4S] cluster</name>
        <dbReference type="ChEBI" id="CHEBI:49883"/>
        <note>4Fe-4S-S-AdoMet</note>
    </ligand>
</feature>
<feature type="binding site" evidence="1">
    <location>
        <position position="27"/>
    </location>
    <ligand>
        <name>[4Fe-4S] cluster</name>
        <dbReference type="ChEBI" id="CHEBI:49883"/>
        <note>4Fe-4S-S-AdoMet</note>
    </ligand>
</feature>
<proteinExistence type="inferred from homology"/>
<keyword id="KW-0004">4Fe-4S</keyword>
<keyword id="KW-0408">Iron</keyword>
<keyword id="KW-0411">Iron-sulfur</keyword>
<keyword id="KW-0456">Lyase</keyword>
<keyword id="KW-0479">Metal-binding</keyword>
<keyword id="KW-1185">Reference proteome</keyword>
<keyword id="KW-0949">S-adenosyl-L-methionine</keyword>
<name>COFG_METB6</name>
<sequence length="329" mass="36711">MEPRVITYTKNVFLPLTSVCRNRCGYCSFRTPVQEGCVMLPEEVEAVLAQGQAAGCTEALFTFGEHPEEEEGFRAYLEKTGYDTILDYCEAMCRLALRYGILPHTNAGILTYDEMKRLRPTNASMGLMLETTARIPAHQGSKGKEPEVRLAMMEDAGRLKIPFTTGLLLGIGETAAGREDSLIAIRDIHKKYGHIQEIILQNFCPKNNTPMAAFRVPDTQEICNTILMARRILPEEISIQVAPNLIDASRLIGCGVSDLGGISPVTIDYVNPEHPWPAFNDLKKIVGDATLQERLCIYPRFIRPGWYDPGLQPLINRLNQRISRGSSQP</sequence>
<organism>
    <name type="scientific">Methanoregula boonei (strain DSM 21154 / JCM 14090 / 6A8)</name>
    <dbReference type="NCBI Taxonomy" id="456442"/>
    <lineage>
        <taxon>Archaea</taxon>
        <taxon>Methanobacteriati</taxon>
        <taxon>Methanobacteriota</taxon>
        <taxon>Stenosarchaea group</taxon>
        <taxon>Methanomicrobia</taxon>
        <taxon>Methanomicrobiales</taxon>
        <taxon>Methanoregulaceae</taxon>
        <taxon>Methanoregula</taxon>
    </lineage>
</organism>
<dbReference type="EC" id="4.3.1.32" evidence="1"/>
<dbReference type="EMBL" id="CP000780">
    <property type="protein sequence ID" value="ABS56715.1"/>
    <property type="molecule type" value="Genomic_DNA"/>
</dbReference>
<dbReference type="RefSeq" id="WP_012107775.1">
    <property type="nucleotide sequence ID" value="NC_009712.1"/>
</dbReference>
<dbReference type="SMR" id="A7IAF4"/>
<dbReference type="STRING" id="456442.Mboo_2201"/>
<dbReference type="GeneID" id="5411221"/>
<dbReference type="KEGG" id="mbn:Mboo_2201"/>
<dbReference type="eggNOG" id="arCOG00657">
    <property type="taxonomic scope" value="Archaea"/>
</dbReference>
<dbReference type="HOGENOM" id="CLU_054174_0_0_2"/>
<dbReference type="OrthoDB" id="35347at2157"/>
<dbReference type="UniPathway" id="UPA00072"/>
<dbReference type="Proteomes" id="UP000002408">
    <property type="component" value="Chromosome"/>
</dbReference>
<dbReference type="GO" id="GO:0051539">
    <property type="term" value="F:4 iron, 4 sulfur cluster binding"/>
    <property type="evidence" value="ECO:0007669"/>
    <property type="project" value="UniProtKB-KW"/>
</dbReference>
<dbReference type="GO" id="GO:0044689">
    <property type="term" value="F:7,8-didemethyl-8-hydroxy-5-deazariboflavin synthase activity"/>
    <property type="evidence" value="ECO:0007669"/>
    <property type="project" value="UniProtKB-EC"/>
</dbReference>
<dbReference type="GO" id="GO:0005506">
    <property type="term" value="F:iron ion binding"/>
    <property type="evidence" value="ECO:0007669"/>
    <property type="project" value="UniProtKB-UniRule"/>
</dbReference>
<dbReference type="GO" id="GO:0016765">
    <property type="term" value="F:transferase activity, transferring alkyl or aryl (other than methyl) groups"/>
    <property type="evidence" value="ECO:0007669"/>
    <property type="project" value="InterPro"/>
</dbReference>
<dbReference type="CDD" id="cd01335">
    <property type="entry name" value="Radical_SAM"/>
    <property type="match status" value="1"/>
</dbReference>
<dbReference type="Gene3D" id="3.20.20.70">
    <property type="entry name" value="Aldolase class I"/>
    <property type="match status" value="1"/>
</dbReference>
<dbReference type="HAMAP" id="MF_01611">
    <property type="entry name" value="FO_synth_sub1"/>
    <property type="match status" value="1"/>
</dbReference>
<dbReference type="InterPro" id="IPR013785">
    <property type="entry name" value="Aldolase_TIM"/>
</dbReference>
<dbReference type="InterPro" id="IPR019939">
    <property type="entry name" value="CofG_family"/>
</dbReference>
<dbReference type="InterPro" id="IPR006638">
    <property type="entry name" value="Elp3/MiaA/NifB-like_rSAM"/>
</dbReference>
<dbReference type="InterPro" id="IPR034405">
    <property type="entry name" value="F420"/>
</dbReference>
<dbReference type="InterPro" id="IPR007197">
    <property type="entry name" value="rSAM"/>
</dbReference>
<dbReference type="NCBIfam" id="TIGR03550">
    <property type="entry name" value="F420_cofG"/>
    <property type="match status" value="1"/>
</dbReference>
<dbReference type="NCBIfam" id="NF004884">
    <property type="entry name" value="PRK06245.1"/>
    <property type="match status" value="1"/>
</dbReference>
<dbReference type="PANTHER" id="PTHR43076:SF15">
    <property type="entry name" value="7,8-DIDEMETHYL-8-HYDROXY-5-DEAZARIBOFLAVIN SYNTHASE"/>
    <property type="match status" value="1"/>
</dbReference>
<dbReference type="PANTHER" id="PTHR43076">
    <property type="entry name" value="FO SYNTHASE (COFH)"/>
    <property type="match status" value="1"/>
</dbReference>
<dbReference type="Pfam" id="PF04055">
    <property type="entry name" value="Radical_SAM"/>
    <property type="match status" value="1"/>
</dbReference>
<dbReference type="SFLD" id="SFLDF00294">
    <property type="entry name" value="7_8-didemethyl-8-hydroxy-5-dea"/>
    <property type="match status" value="1"/>
</dbReference>
<dbReference type="SFLD" id="SFLDS00029">
    <property type="entry name" value="Radical_SAM"/>
    <property type="match status" value="1"/>
</dbReference>
<dbReference type="SMART" id="SM00729">
    <property type="entry name" value="Elp3"/>
    <property type="match status" value="1"/>
</dbReference>
<dbReference type="SUPFAM" id="SSF102114">
    <property type="entry name" value="Radical SAM enzymes"/>
    <property type="match status" value="1"/>
</dbReference>
<dbReference type="PROSITE" id="PS51918">
    <property type="entry name" value="RADICAL_SAM"/>
    <property type="match status" value="1"/>
</dbReference>
<comment type="function">
    <text evidence="1">Catalyzes the radical-mediated synthesis of 7,8-didemethyl-8-hydroxy-5-deazariboflavin from 5-amino-5-(4-hydroxybenzyl)-6-(D-ribitylimino)-5,6-dihydrouracil.</text>
</comment>
<comment type="catalytic activity">
    <reaction evidence="1">
        <text>5-amino-5-(4-hydroxybenzyl)-6-(D-ribitylimino)-5,6-dihydrouracil + S-adenosyl-L-methionine = 7,8-didemethyl-8-hydroxy-5-deazariboflavin + 5'-deoxyadenosine + L-methionine + NH4(+) + H(+)</text>
        <dbReference type="Rhea" id="RHEA:55204"/>
        <dbReference type="ChEBI" id="CHEBI:15378"/>
        <dbReference type="ChEBI" id="CHEBI:17319"/>
        <dbReference type="ChEBI" id="CHEBI:28938"/>
        <dbReference type="ChEBI" id="CHEBI:57844"/>
        <dbReference type="ChEBI" id="CHEBI:59789"/>
        <dbReference type="ChEBI" id="CHEBI:59904"/>
        <dbReference type="ChEBI" id="CHEBI:85936"/>
        <dbReference type="EC" id="4.3.1.32"/>
    </reaction>
</comment>
<comment type="cofactor">
    <cofactor evidence="1">
        <name>[4Fe-4S] cluster</name>
        <dbReference type="ChEBI" id="CHEBI:49883"/>
    </cofactor>
    <text evidence="1">Binds 1 [4Fe-4S] cluster. The cluster is coordinated with 3 cysteines and an exchangeable S-adenosyl-L-methionine.</text>
</comment>
<comment type="pathway">
    <text evidence="1">Cofactor biosynthesis; coenzyme F0 biosynthesis.</text>
</comment>
<comment type="subunit">
    <text evidence="1">Consists of two subunits, CofG and CofH.</text>
</comment>
<comment type="similarity">
    <text evidence="1">Belongs to the radical SAM superfamily. CofG family.</text>
</comment>
<accession>A7IAF4</accession>
<protein>
    <recommendedName>
        <fullName evidence="1">7,8-didemethyl-8-hydroxy-5-deazariboflavin synthase</fullName>
        <ecNumber evidence="1">4.3.1.32</ecNumber>
    </recommendedName>
    <alternativeName>
        <fullName evidence="1">FO synthase subunit 1</fullName>
    </alternativeName>
</protein>
<reference key="1">
    <citation type="journal article" date="2015" name="Microbiology">
        <title>Genome of Methanoregula boonei 6A8 reveals adaptations to oligotrophic peatland environments.</title>
        <authorList>
            <person name="Braeuer S."/>
            <person name="Cadillo-Quiroz H."/>
            <person name="Kyrpides N."/>
            <person name="Woyke T."/>
            <person name="Goodwin L."/>
            <person name="Detter C."/>
            <person name="Podell S."/>
            <person name="Yavitt J.B."/>
            <person name="Zinder S.H."/>
        </authorList>
    </citation>
    <scope>NUCLEOTIDE SEQUENCE [LARGE SCALE GENOMIC DNA]</scope>
    <source>
        <strain>DSM 21154 / JCM 14090 / 6A8</strain>
    </source>
</reference>